<name>DCD_CALMQ</name>
<keyword id="KW-0378">Hydrolase</keyword>
<keyword id="KW-0546">Nucleotide metabolism</keyword>
<keyword id="KW-0547">Nucleotide-binding</keyword>
<keyword id="KW-1185">Reference proteome</keyword>
<gene>
    <name evidence="1" type="primary">dcd</name>
    <name type="ordered locus">Cmaq_0525</name>
</gene>
<protein>
    <recommendedName>
        <fullName evidence="1">dCTP deaminase</fullName>
        <ecNumber evidence="1">3.5.4.13</ecNumber>
    </recommendedName>
    <alternativeName>
        <fullName evidence="1">Deoxycytidine triphosphate deaminase</fullName>
    </alternativeName>
</protein>
<proteinExistence type="inferred from homology"/>
<reference key="1">
    <citation type="submission" date="2007-10" db="EMBL/GenBank/DDBJ databases">
        <title>Complete sequence of Caldivirga maquilingensis IC-167.</title>
        <authorList>
            <consortium name="US DOE Joint Genome Institute"/>
            <person name="Copeland A."/>
            <person name="Lucas S."/>
            <person name="Lapidus A."/>
            <person name="Barry K."/>
            <person name="Glavina del Rio T."/>
            <person name="Dalin E."/>
            <person name="Tice H."/>
            <person name="Pitluck S."/>
            <person name="Saunders E."/>
            <person name="Brettin T."/>
            <person name="Bruce D."/>
            <person name="Detter J.C."/>
            <person name="Han C."/>
            <person name="Schmutz J."/>
            <person name="Larimer F."/>
            <person name="Land M."/>
            <person name="Hauser L."/>
            <person name="Kyrpides N."/>
            <person name="Ivanova N."/>
            <person name="Biddle J.F."/>
            <person name="Zhang Z."/>
            <person name="Fitz-Gibbon S.T."/>
            <person name="Lowe T.M."/>
            <person name="Saltikov C."/>
            <person name="House C.H."/>
            <person name="Richardson P."/>
        </authorList>
    </citation>
    <scope>NUCLEOTIDE SEQUENCE [LARGE SCALE GENOMIC DNA]</scope>
    <source>
        <strain>ATCC 700844 / DSM 13496 / JCM 10307 / IC-167</strain>
    </source>
</reference>
<evidence type="ECO:0000255" key="1">
    <source>
        <dbReference type="HAMAP-Rule" id="MF_00146"/>
    </source>
</evidence>
<organism>
    <name type="scientific">Caldivirga maquilingensis (strain ATCC 700844 / DSM 13496 / JCM 10307 / IC-167)</name>
    <dbReference type="NCBI Taxonomy" id="397948"/>
    <lineage>
        <taxon>Archaea</taxon>
        <taxon>Thermoproteota</taxon>
        <taxon>Thermoprotei</taxon>
        <taxon>Thermoproteales</taxon>
        <taxon>Thermoproteaceae</taxon>
        <taxon>Caldivirga</taxon>
    </lineage>
</organism>
<sequence length="179" mass="19846">MILARGEILKLIKDGSLGIEPFTEDVVRENGLDLRVGNEYAIYAFENQVIDPCELESTRHLFSIVEAKDGRIIIPPRSFALLTTMEYVKFPRDVIGFCNLRSTLARYGLGVPPTIIDTGFEGNITIEVINNSGNYVVLRPGMRFLHVVLAKTIGEAKYQGKYLGQRGVTPPKGLKGECS</sequence>
<feature type="chain" id="PRO_1000189829" description="dCTP deaminase">
    <location>
        <begin position="1"/>
        <end position="179"/>
    </location>
</feature>
<feature type="active site" description="Proton donor/acceptor" evidence="1">
    <location>
        <position position="127"/>
    </location>
</feature>
<feature type="binding site" evidence="1">
    <location>
        <begin position="101"/>
        <end position="106"/>
    </location>
    <ligand>
        <name>dCTP</name>
        <dbReference type="ChEBI" id="CHEBI:61481"/>
    </ligand>
</feature>
<feature type="binding site" evidence="1">
    <location>
        <position position="117"/>
    </location>
    <ligand>
        <name>dCTP</name>
        <dbReference type="ChEBI" id="CHEBI:61481"/>
    </ligand>
</feature>
<feature type="binding site" evidence="1">
    <location>
        <position position="165"/>
    </location>
    <ligand>
        <name>dCTP</name>
        <dbReference type="ChEBI" id="CHEBI:61481"/>
    </ligand>
</feature>
<dbReference type="EC" id="3.5.4.13" evidence="1"/>
<dbReference type="EMBL" id="CP000852">
    <property type="protein sequence ID" value="ABW01370.1"/>
    <property type="molecule type" value="Genomic_DNA"/>
</dbReference>
<dbReference type="RefSeq" id="WP_012185590.1">
    <property type="nucleotide sequence ID" value="NC_009954.1"/>
</dbReference>
<dbReference type="SMR" id="A8MC64"/>
<dbReference type="STRING" id="397948.Cmaq_0525"/>
<dbReference type="GeneID" id="5709628"/>
<dbReference type="KEGG" id="cma:Cmaq_0525"/>
<dbReference type="eggNOG" id="arCOG04048">
    <property type="taxonomic scope" value="Archaea"/>
</dbReference>
<dbReference type="HOGENOM" id="CLU_087476_3_0_2"/>
<dbReference type="OrthoDB" id="33242at2157"/>
<dbReference type="UniPathway" id="UPA00610">
    <property type="reaction ID" value="UER00665"/>
</dbReference>
<dbReference type="Proteomes" id="UP000001137">
    <property type="component" value="Chromosome"/>
</dbReference>
<dbReference type="GO" id="GO:0008829">
    <property type="term" value="F:dCTP deaminase activity"/>
    <property type="evidence" value="ECO:0007669"/>
    <property type="project" value="UniProtKB-UniRule"/>
</dbReference>
<dbReference type="GO" id="GO:0000166">
    <property type="term" value="F:nucleotide binding"/>
    <property type="evidence" value="ECO:0007669"/>
    <property type="project" value="UniProtKB-KW"/>
</dbReference>
<dbReference type="GO" id="GO:0006226">
    <property type="term" value="P:dUMP biosynthetic process"/>
    <property type="evidence" value="ECO:0007669"/>
    <property type="project" value="UniProtKB-UniPathway"/>
</dbReference>
<dbReference type="GO" id="GO:0006229">
    <property type="term" value="P:dUTP biosynthetic process"/>
    <property type="evidence" value="ECO:0007669"/>
    <property type="project" value="UniProtKB-UniRule"/>
</dbReference>
<dbReference type="CDD" id="cd07557">
    <property type="entry name" value="trimeric_dUTPase"/>
    <property type="match status" value="1"/>
</dbReference>
<dbReference type="Gene3D" id="2.70.40.10">
    <property type="match status" value="1"/>
</dbReference>
<dbReference type="HAMAP" id="MF_00146">
    <property type="entry name" value="dCTP_deaminase"/>
    <property type="match status" value="1"/>
</dbReference>
<dbReference type="InterPro" id="IPR011962">
    <property type="entry name" value="dCTP_deaminase"/>
</dbReference>
<dbReference type="InterPro" id="IPR036157">
    <property type="entry name" value="dUTPase-like_sf"/>
</dbReference>
<dbReference type="InterPro" id="IPR033704">
    <property type="entry name" value="dUTPase_trimeric"/>
</dbReference>
<dbReference type="NCBIfam" id="TIGR02274">
    <property type="entry name" value="dCTP_deam"/>
    <property type="match status" value="1"/>
</dbReference>
<dbReference type="PANTHER" id="PTHR42680">
    <property type="entry name" value="DCTP DEAMINASE"/>
    <property type="match status" value="1"/>
</dbReference>
<dbReference type="PANTHER" id="PTHR42680:SF3">
    <property type="entry name" value="DCTP DEAMINASE"/>
    <property type="match status" value="1"/>
</dbReference>
<dbReference type="Pfam" id="PF22769">
    <property type="entry name" value="DCD"/>
    <property type="match status" value="1"/>
</dbReference>
<dbReference type="SUPFAM" id="SSF51283">
    <property type="entry name" value="dUTPase-like"/>
    <property type="match status" value="1"/>
</dbReference>
<accession>A8MC64</accession>
<comment type="function">
    <text evidence="1">Catalyzes the deamination of dCTP to dUTP.</text>
</comment>
<comment type="catalytic activity">
    <reaction evidence="1">
        <text>dCTP + H2O + H(+) = dUTP + NH4(+)</text>
        <dbReference type="Rhea" id="RHEA:22680"/>
        <dbReference type="ChEBI" id="CHEBI:15377"/>
        <dbReference type="ChEBI" id="CHEBI:15378"/>
        <dbReference type="ChEBI" id="CHEBI:28938"/>
        <dbReference type="ChEBI" id="CHEBI:61481"/>
        <dbReference type="ChEBI" id="CHEBI:61555"/>
        <dbReference type="EC" id="3.5.4.13"/>
    </reaction>
</comment>
<comment type="pathway">
    <text evidence="1">Pyrimidine metabolism; dUMP biosynthesis; dUMP from dCTP (dUTP route): step 1/2.</text>
</comment>
<comment type="subunit">
    <text evidence="1">Homotrimer.</text>
</comment>
<comment type="similarity">
    <text evidence="1">Belongs to the dCTP deaminase family.</text>
</comment>